<gene>
    <name evidence="1" type="primary">rpsZ</name>
    <name evidence="1" type="synonym">rpsN</name>
    <name type="ordered locus">Rcas_4013</name>
</gene>
<proteinExistence type="inferred from homology"/>
<keyword id="KW-0479">Metal-binding</keyword>
<keyword id="KW-1185">Reference proteome</keyword>
<keyword id="KW-0687">Ribonucleoprotein</keyword>
<keyword id="KW-0689">Ribosomal protein</keyword>
<keyword id="KW-0694">RNA-binding</keyword>
<keyword id="KW-0699">rRNA-binding</keyword>
<keyword id="KW-0862">Zinc</keyword>
<comment type="function">
    <text evidence="1">Binds 16S rRNA, required for the assembly of 30S particles and may also be responsible for determining the conformation of the 16S rRNA at the A site.</text>
</comment>
<comment type="cofactor">
    <cofactor evidence="1">
        <name>Zn(2+)</name>
        <dbReference type="ChEBI" id="CHEBI:29105"/>
    </cofactor>
    <text evidence="1">Binds 1 zinc ion per subunit.</text>
</comment>
<comment type="subunit">
    <text evidence="1">Part of the 30S ribosomal subunit. Contacts proteins S3 and S10.</text>
</comment>
<comment type="similarity">
    <text evidence="1">Belongs to the universal ribosomal protein uS14 family. Zinc-binding uS14 subfamily.</text>
</comment>
<feature type="chain" id="PRO_1000087019" description="Small ribosomal subunit protein uS14">
    <location>
        <begin position="1"/>
        <end position="61"/>
    </location>
</feature>
<feature type="binding site" evidence="1">
    <location>
        <position position="24"/>
    </location>
    <ligand>
        <name>Zn(2+)</name>
        <dbReference type="ChEBI" id="CHEBI:29105"/>
    </ligand>
</feature>
<feature type="binding site" evidence="1">
    <location>
        <position position="27"/>
    </location>
    <ligand>
        <name>Zn(2+)</name>
        <dbReference type="ChEBI" id="CHEBI:29105"/>
    </ligand>
</feature>
<feature type="binding site" evidence="1">
    <location>
        <position position="40"/>
    </location>
    <ligand>
        <name>Zn(2+)</name>
        <dbReference type="ChEBI" id="CHEBI:29105"/>
    </ligand>
</feature>
<feature type="binding site" evidence="1">
    <location>
        <position position="43"/>
    </location>
    <ligand>
        <name>Zn(2+)</name>
        <dbReference type="ChEBI" id="CHEBI:29105"/>
    </ligand>
</feature>
<evidence type="ECO:0000255" key="1">
    <source>
        <dbReference type="HAMAP-Rule" id="MF_01364"/>
    </source>
</evidence>
<evidence type="ECO:0000305" key="2"/>
<sequence length="61" mass="7182">MARKALMVKAQRPQKYTVRAYNRCKICGRSRAYMRKFGMCRICFREHALRGLIPGVTKSSW</sequence>
<protein>
    <recommendedName>
        <fullName evidence="1">Small ribosomal subunit protein uS14</fullName>
    </recommendedName>
    <alternativeName>
        <fullName evidence="2">30S ribosomal protein S14 type Z</fullName>
    </alternativeName>
</protein>
<organism>
    <name type="scientific">Roseiflexus castenholzii (strain DSM 13941 / HLO8)</name>
    <dbReference type="NCBI Taxonomy" id="383372"/>
    <lineage>
        <taxon>Bacteria</taxon>
        <taxon>Bacillati</taxon>
        <taxon>Chloroflexota</taxon>
        <taxon>Chloroflexia</taxon>
        <taxon>Chloroflexales</taxon>
        <taxon>Roseiflexineae</taxon>
        <taxon>Roseiflexaceae</taxon>
        <taxon>Roseiflexus</taxon>
    </lineage>
</organism>
<name>RS14Z_ROSCS</name>
<dbReference type="EMBL" id="CP000804">
    <property type="protein sequence ID" value="ABU60046.1"/>
    <property type="molecule type" value="Genomic_DNA"/>
</dbReference>
<dbReference type="RefSeq" id="WP_012122468.1">
    <property type="nucleotide sequence ID" value="NC_009767.1"/>
</dbReference>
<dbReference type="SMR" id="A7NR50"/>
<dbReference type="STRING" id="383372.Rcas_4013"/>
<dbReference type="KEGG" id="rca:Rcas_4013"/>
<dbReference type="eggNOG" id="COG0199">
    <property type="taxonomic scope" value="Bacteria"/>
</dbReference>
<dbReference type="HOGENOM" id="CLU_139869_3_0_0"/>
<dbReference type="OrthoDB" id="9810484at2"/>
<dbReference type="Proteomes" id="UP000000263">
    <property type="component" value="Chromosome"/>
</dbReference>
<dbReference type="GO" id="GO:0005737">
    <property type="term" value="C:cytoplasm"/>
    <property type="evidence" value="ECO:0007669"/>
    <property type="project" value="UniProtKB-ARBA"/>
</dbReference>
<dbReference type="GO" id="GO:0015935">
    <property type="term" value="C:small ribosomal subunit"/>
    <property type="evidence" value="ECO:0007669"/>
    <property type="project" value="TreeGrafter"/>
</dbReference>
<dbReference type="GO" id="GO:0019843">
    <property type="term" value="F:rRNA binding"/>
    <property type="evidence" value="ECO:0007669"/>
    <property type="project" value="UniProtKB-UniRule"/>
</dbReference>
<dbReference type="GO" id="GO:0003735">
    <property type="term" value="F:structural constituent of ribosome"/>
    <property type="evidence" value="ECO:0007669"/>
    <property type="project" value="InterPro"/>
</dbReference>
<dbReference type="GO" id="GO:0008270">
    <property type="term" value="F:zinc ion binding"/>
    <property type="evidence" value="ECO:0007669"/>
    <property type="project" value="UniProtKB-UniRule"/>
</dbReference>
<dbReference type="GO" id="GO:0006412">
    <property type="term" value="P:translation"/>
    <property type="evidence" value="ECO:0007669"/>
    <property type="project" value="UniProtKB-UniRule"/>
</dbReference>
<dbReference type="FunFam" id="4.10.830.10:FF:000001">
    <property type="entry name" value="30S ribosomal protein S14 type Z"/>
    <property type="match status" value="1"/>
</dbReference>
<dbReference type="Gene3D" id="4.10.830.10">
    <property type="entry name" value="30s Ribosomal Protein S14, Chain N"/>
    <property type="match status" value="1"/>
</dbReference>
<dbReference type="HAMAP" id="MF_01364_B">
    <property type="entry name" value="Ribosomal_uS14_2_B"/>
    <property type="match status" value="1"/>
</dbReference>
<dbReference type="InterPro" id="IPR001209">
    <property type="entry name" value="Ribosomal_uS14"/>
</dbReference>
<dbReference type="InterPro" id="IPR023053">
    <property type="entry name" value="Ribosomal_uS14_bact"/>
</dbReference>
<dbReference type="InterPro" id="IPR018271">
    <property type="entry name" value="Ribosomal_uS14_CS"/>
</dbReference>
<dbReference type="InterPro" id="IPR043140">
    <property type="entry name" value="Ribosomal_uS14_sf"/>
</dbReference>
<dbReference type="NCBIfam" id="NF005974">
    <property type="entry name" value="PRK08061.1"/>
    <property type="match status" value="1"/>
</dbReference>
<dbReference type="PANTHER" id="PTHR19836">
    <property type="entry name" value="30S RIBOSOMAL PROTEIN S14"/>
    <property type="match status" value="1"/>
</dbReference>
<dbReference type="PANTHER" id="PTHR19836:SF19">
    <property type="entry name" value="SMALL RIBOSOMAL SUBUNIT PROTEIN US14M"/>
    <property type="match status" value="1"/>
</dbReference>
<dbReference type="Pfam" id="PF00253">
    <property type="entry name" value="Ribosomal_S14"/>
    <property type="match status" value="1"/>
</dbReference>
<dbReference type="SUPFAM" id="SSF57716">
    <property type="entry name" value="Glucocorticoid receptor-like (DNA-binding domain)"/>
    <property type="match status" value="1"/>
</dbReference>
<dbReference type="PROSITE" id="PS00527">
    <property type="entry name" value="RIBOSOMAL_S14"/>
    <property type="match status" value="1"/>
</dbReference>
<accession>A7NR50</accession>
<reference key="1">
    <citation type="submission" date="2007-08" db="EMBL/GenBank/DDBJ databases">
        <title>Complete sequence of Roseiflexus castenholzii DSM 13941.</title>
        <authorList>
            <consortium name="US DOE Joint Genome Institute"/>
            <person name="Copeland A."/>
            <person name="Lucas S."/>
            <person name="Lapidus A."/>
            <person name="Barry K."/>
            <person name="Glavina del Rio T."/>
            <person name="Dalin E."/>
            <person name="Tice H."/>
            <person name="Pitluck S."/>
            <person name="Thompson L.S."/>
            <person name="Brettin T."/>
            <person name="Bruce D."/>
            <person name="Detter J.C."/>
            <person name="Han C."/>
            <person name="Tapia R."/>
            <person name="Schmutz J."/>
            <person name="Larimer F."/>
            <person name="Land M."/>
            <person name="Hauser L."/>
            <person name="Kyrpides N."/>
            <person name="Mikhailova N."/>
            <person name="Bryant D.A."/>
            <person name="Hanada S."/>
            <person name="Tsukatani Y."/>
            <person name="Richardson P."/>
        </authorList>
    </citation>
    <scope>NUCLEOTIDE SEQUENCE [LARGE SCALE GENOMIC DNA]</scope>
    <source>
        <strain>DSM 13941 / HLO8</strain>
    </source>
</reference>